<comment type="function">
    <text evidence="1">Single strand-specific metallo-endoribonuclease involved in late-stage 70S ribosome quality control and in maturation of the 3' terminus of the 16S rRNA.</text>
</comment>
<comment type="cofactor">
    <cofactor evidence="1">
        <name>Zn(2+)</name>
        <dbReference type="ChEBI" id="CHEBI:29105"/>
    </cofactor>
    <text evidence="1">Binds 1 zinc ion.</text>
</comment>
<comment type="subcellular location">
    <subcellularLocation>
        <location evidence="1">Cytoplasm</location>
    </subcellularLocation>
</comment>
<comment type="similarity">
    <text evidence="1">Belongs to the endoribonuclease YbeY family.</text>
</comment>
<name>YBEY_STAES</name>
<gene>
    <name evidence="1" type="primary">ybeY</name>
    <name type="ordered locus">SE_1257</name>
</gene>
<sequence length="155" mass="17998">MFTIDFSDHTGLVETSWFDQIDQLLTFAKKKENIHNDAELSVTFVDKDEIQNINKVYRDKDKVTDVISFALEEDEPEIDFNDFDIPRVLGDIIICTDVAKEQSESYGHSFERELGFLALHGFLHLLGYDHMNDNDEKEMFGRQDAILNEFGLTRN</sequence>
<feature type="chain" id="PRO_0000102533" description="Endoribonuclease YbeY">
    <location>
        <begin position="1"/>
        <end position="155"/>
    </location>
</feature>
<feature type="binding site" evidence="1">
    <location>
        <position position="120"/>
    </location>
    <ligand>
        <name>Zn(2+)</name>
        <dbReference type="ChEBI" id="CHEBI:29105"/>
        <note>catalytic</note>
    </ligand>
</feature>
<feature type="binding site" evidence="1">
    <location>
        <position position="124"/>
    </location>
    <ligand>
        <name>Zn(2+)</name>
        <dbReference type="ChEBI" id="CHEBI:29105"/>
        <note>catalytic</note>
    </ligand>
</feature>
<feature type="binding site" evidence="1">
    <location>
        <position position="130"/>
    </location>
    <ligand>
        <name>Zn(2+)</name>
        <dbReference type="ChEBI" id="CHEBI:29105"/>
        <note>catalytic</note>
    </ligand>
</feature>
<evidence type="ECO:0000255" key="1">
    <source>
        <dbReference type="HAMAP-Rule" id="MF_00009"/>
    </source>
</evidence>
<reference key="1">
    <citation type="journal article" date="2003" name="Mol. Microbiol.">
        <title>Genome-based analysis of virulence genes in a non-biofilm-forming Staphylococcus epidermidis strain (ATCC 12228).</title>
        <authorList>
            <person name="Zhang Y.-Q."/>
            <person name="Ren S.-X."/>
            <person name="Li H.-L."/>
            <person name="Wang Y.-X."/>
            <person name="Fu G."/>
            <person name="Yang J."/>
            <person name="Qin Z.-Q."/>
            <person name="Miao Y.-G."/>
            <person name="Wang W.-Y."/>
            <person name="Chen R.-S."/>
            <person name="Shen Y."/>
            <person name="Chen Z."/>
            <person name="Yuan Z.-H."/>
            <person name="Zhao G.-P."/>
            <person name="Qu D."/>
            <person name="Danchin A."/>
            <person name="Wen Y.-M."/>
        </authorList>
    </citation>
    <scope>NUCLEOTIDE SEQUENCE [LARGE SCALE GENOMIC DNA]</scope>
    <source>
        <strain>ATCC 12228 / FDA PCI 1200</strain>
    </source>
</reference>
<dbReference type="EC" id="3.1.-.-" evidence="1"/>
<dbReference type="EMBL" id="AE015929">
    <property type="protein sequence ID" value="AAO04856.1"/>
    <property type="molecule type" value="Genomic_DNA"/>
</dbReference>
<dbReference type="RefSeq" id="NP_764812.1">
    <property type="nucleotide sequence ID" value="NC_004461.1"/>
</dbReference>
<dbReference type="RefSeq" id="WP_001831142.1">
    <property type="nucleotide sequence ID" value="NZ_WBME01000008.1"/>
</dbReference>
<dbReference type="SMR" id="Q8CSD3"/>
<dbReference type="GeneID" id="50018627"/>
<dbReference type="KEGG" id="sep:SE_1257"/>
<dbReference type="PATRIC" id="fig|176280.10.peg.1225"/>
<dbReference type="eggNOG" id="COG0319">
    <property type="taxonomic scope" value="Bacteria"/>
</dbReference>
<dbReference type="HOGENOM" id="CLU_106710_3_0_9"/>
<dbReference type="OrthoDB" id="9807740at2"/>
<dbReference type="Proteomes" id="UP000001411">
    <property type="component" value="Chromosome"/>
</dbReference>
<dbReference type="GO" id="GO:0005737">
    <property type="term" value="C:cytoplasm"/>
    <property type="evidence" value="ECO:0007669"/>
    <property type="project" value="UniProtKB-SubCell"/>
</dbReference>
<dbReference type="GO" id="GO:0004222">
    <property type="term" value="F:metalloendopeptidase activity"/>
    <property type="evidence" value="ECO:0007669"/>
    <property type="project" value="InterPro"/>
</dbReference>
<dbReference type="GO" id="GO:0004521">
    <property type="term" value="F:RNA endonuclease activity"/>
    <property type="evidence" value="ECO:0007669"/>
    <property type="project" value="UniProtKB-UniRule"/>
</dbReference>
<dbReference type="GO" id="GO:0008270">
    <property type="term" value="F:zinc ion binding"/>
    <property type="evidence" value="ECO:0007669"/>
    <property type="project" value="UniProtKB-UniRule"/>
</dbReference>
<dbReference type="GO" id="GO:0006364">
    <property type="term" value="P:rRNA processing"/>
    <property type="evidence" value="ECO:0007669"/>
    <property type="project" value="UniProtKB-UniRule"/>
</dbReference>
<dbReference type="Gene3D" id="3.40.390.30">
    <property type="entry name" value="Metalloproteases ('zincins'), catalytic domain"/>
    <property type="match status" value="1"/>
</dbReference>
<dbReference type="HAMAP" id="MF_00009">
    <property type="entry name" value="Endoribonucl_YbeY"/>
    <property type="match status" value="1"/>
</dbReference>
<dbReference type="InterPro" id="IPR023091">
    <property type="entry name" value="MetalPrtase_cat_dom_sf_prd"/>
</dbReference>
<dbReference type="InterPro" id="IPR002036">
    <property type="entry name" value="YbeY"/>
</dbReference>
<dbReference type="InterPro" id="IPR020549">
    <property type="entry name" value="YbeY_CS"/>
</dbReference>
<dbReference type="NCBIfam" id="TIGR00043">
    <property type="entry name" value="rRNA maturation RNase YbeY"/>
    <property type="match status" value="1"/>
</dbReference>
<dbReference type="PANTHER" id="PTHR46986">
    <property type="entry name" value="ENDORIBONUCLEASE YBEY, CHLOROPLASTIC"/>
    <property type="match status" value="1"/>
</dbReference>
<dbReference type="PANTHER" id="PTHR46986:SF1">
    <property type="entry name" value="ENDORIBONUCLEASE YBEY, CHLOROPLASTIC"/>
    <property type="match status" value="1"/>
</dbReference>
<dbReference type="Pfam" id="PF02130">
    <property type="entry name" value="YbeY"/>
    <property type="match status" value="1"/>
</dbReference>
<dbReference type="SUPFAM" id="SSF55486">
    <property type="entry name" value="Metalloproteases ('zincins'), catalytic domain"/>
    <property type="match status" value="1"/>
</dbReference>
<dbReference type="PROSITE" id="PS01306">
    <property type="entry name" value="UPF0054"/>
    <property type="match status" value="1"/>
</dbReference>
<protein>
    <recommendedName>
        <fullName evidence="1">Endoribonuclease YbeY</fullName>
        <ecNumber evidence="1">3.1.-.-</ecNumber>
    </recommendedName>
</protein>
<keyword id="KW-0963">Cytoplasm</keyword>
<keyword id="KW-0255">Endonuclease</keyword>
<keyword id="KW-0378">Hydrolase</keyword>
<keyword id="KW-0479">Metal-binding</keyword>
<keyword id="KW-0540">Nuclease</keyword>
<keyword id="KW-0690">Ribosome biogenesis</keyword>
<keyword id="KW-0698">rRNA processing</keyword>
<keyword id="KW-0862">Zinc</keyword>
<organism>
    <name type="scientific">Staphylococcus epidermidis (strain ATCC 12228 / FDA PCI 1200)</name>
    <dbReference type="NCBI Taxonomy" id="176280"/>
    <lineage>
        <taxon>Bacteria</taxon>
        <taxon>Bacillati</taxon>
        <taxon>Bacillota</taxon>
        <taxon>Bacilli</taxon>
        <taxon>Bacillales</taxon>
        <taxon>Staphylococcaceae</taxon>
        <taxon>Staphylococcus</taxon>
    </lineage>
</organism>
<accession>Q8CSD3</accession>
<proteinExistence type="inferred from homology"/>